<sequence length="38" mass="4405">MKVRTSVKTLCRNCKIVKRHGIIRVICSSDPKHKQRQG</sequence>
<gene>
    <name evidence="1" type="primary">rpmJ</name>
    <name type="ordered locus">BCI_0349</name>
</gene>
<proteinExistence type="inferred from homology"/>
<reference key="1">
    <citation type="journal article" date="2006" name="PLoS Biol.">
        <title>Metabolic complementarity and genomics of the dual bacterial symbiosis of sharpshooters.</title>
        <authorList>
            <person name="Wu D."/>
            <person name="Daugherty S.C."/>
            <person name="Van Aken S.E."/>
            <person name="Pai G.H."/>
            <person name="Watkins K.L."/>
            <person name="Khouri H."/>
            <person name="Tallon L.J."/>
            <person name="Zaborsky J.M."/>
            <person name="Dunbar H.E."/>
            <person name="Tran P.L."/>
            <person name="Moran N.A."/>
            <person name="Eisen J.A."/>
        </authorList>
    </citation>
    <scope>NUCLEOTIDE SEQUENCE [LARGE SCALE GENOMIC DNA]</scope>
</reference>
<keyword id="KW-1185">Reference proteome</keyword>
<keyword id="KW-0687">Ribonucleoprotein</keyword>
<keyword id="KW-0689">Ribosomal protein</keyword>
<dbReference type="EMBL" id="CP000238">
    <property type="protein sequence ID" value="ABF14021.1"/>
    <property type="molecule type" value="Genomic_DNA"/>
</dbReference>
<dbReference type="RefSeq" id="WP_011520530.1">
    <property type="nucleotide sequence ID" value="NC_007984.1"/>
</dbReference>
<dbReference type="SMR" id="Q1LTB7"/>
<dbReference type="STRING" id="374463.BCI_0349"/>
<dbReference type="KEGG" id="bci:BCI_0349"/>
<dbReference type="HOGENOM" id="CLU_135723_6_2_6"/>
<dbReference type="OrthoDB" id="9802520at2"/>
<dbReference type="Proteomes" id="UP000002427">
    <property type="component" value="Chromosome"/>
</dbReference>
<dbReference type="GO" id="GO:0005737">
    <property type="term" value="C:cytoplasm"/>
    <property type="evidence" value="ECO:0007669"/>
    <property type="project" value="UniProtKB-ARBA"/>
</dbReference>
<dbReference type="GO" id="GO:1990904">
    <property type="term" value="C:ribonucleoprotein complex"/>
    <property type="evidence" value="ECO:0007669"/>
    <property type="project" value="UniProtKB-KW"/>
</dbReference>
<dbReference type="GO" id="GO:0005840">
    <property type="term" value="C:ribosome"/>
    <property type="evidence" value="ECO:0007669"/>
    <property type="project" value="UniProtKB-KW"/>
</dbReference>
<dbReference type="GO" id="GO:0003735">
    <property type="term" value="F:structural constituent of ribosome"/>
    <property type="evidence" value="ECO:0007669"/>
    <property type="project" value="InterPro"/>
</dbReference>
<dbReference type="GO" id="GO:0006412">
    <property type="term" value="P:translation"/>
    <property type="evidence" value="ECO:0007669"/>
    <property type="project" value="UniProtKB-UniRule"/>
</dbReference>
<dbReference type="HAMAP" id="MF_00251">
    <property type="entry name" value="Ribosomal_bL36"/>
    <property type="match status" value="1"/>
</dbReference>
<dbReference type="InterPro" id="IPR000473">
    <property type="entry name" value="Ribosomal_bL36"/>
</dbReference>
<dbReference type="InterPro" id="IPR035977">
    <property type="entry name" value="Ribosomal_bL36_sp"/>
</dbReference>
<dbReference type="NCBIfam" id="TIGR01022">
    <property type="entry name" value="rpmJ_bact"/>
    <property type="match status" value="1"/>
</dbReference>
<dbReference type="PANTHER" id="PTHR42888">
    <property type="entry name" value="50S RIBOSOMAL PROTEIN L36, CHLOROPLASTIC"/>
    <property type="match status" value="1"/>
</dbReference>
<dbReference type="PANTHER" id="PTHR42888:SF1">
    <property type="entry name" value="LARGE RIBOSOMAL SUBUNIT PROTEIN BL36C"/>
    <property type="match status" value="1"/>
</dbReference>
<dbReference type="Pfam" id="PF00444">
    <property type="entry name" value="Ribosomal_L36"/>
    <property type="match status" value="1"/>
</dbReference>
<dbReference type="SUPFAM" id="SSF57840">
    <property type="entry name" value="Ribosomal protein L36"/>
    <property type="match status" value="1"/>
</dbReference>
<dbReference type="PROSITE" id="PS00828">
    <property type="entry name" value="RIBOSOMAL_L36"/>
    <property type="match status" value="1"/>
</dbReference>
<comment type="similarity">
    <text evidence="1">Belongs to the bacterial ribosomal protein bL36 family.</text>
</comment>
<name>RL36_BAUCH</name>
<evidence type="ECO:0000255" key="1">
    <source>
        <dbReference type="HAMAP-Rule" id="MF_00251"/>
    </source>
</evidence>
<evidence type="ECO:0000305" key="2"/>
<accession>Q1LTB7</accession>
<organism>
    <name type="scientific">Baumannia cicadellinicola subsp. Homalodisca coagulata</name>
    <dbReference type="NCBI Taxonomy" id="374463"/>
    <lineage>
        <taxon>Bacteria</taxon>
        <taxon>Pseudomonadati</taxon>
        <taxon>Pseudomonadota</taxon>
        <taxon>Gammaproteobacteria</taxon>
        <taxon>Candidatus Palibaumannia</taxon>
    </lineage>
</organism>
<feature type="chain" id="PRO_0000302159" description="Large ribosomal subunit protein bL36">
    <location>
        <begin position="1"/>
        <end position="38"/>
    </location>
</feature>
<protein>
    <recommendedName>
        <fullName evidence="1">Large ribosomal subunit protein bL36</fullName>
    </recommendedName>
    <alternativeName>
        <fullName evidence="2">50S ribosomal protein L36</fullName>
    </alternativeName>
</protein>